<organism>
    <name type="scientific">Mycolicibacterium paratuberculosis (strain ATCC BAA-968 / K-10)</name>
    <name type="common">Mycobacterium paratuberculosis</name>
    <dbReference type="NCBI Taxonomy" id="262316"/>
    <lineage>
        <taxon>Bacteria</taxon>
        <taxon>Bacillati</taxon>
        <taxon>Actinomycetota</taxon>
        <taxon>Actinomycetes</taxon>
        <taxon>Mycobacteriales</taxon>
        <taxon>Mycobacteriaceae</taxon>
        <taxon>Mycobacterium</taxon>
        <taxon>Mycobacterium avium complex (MAC)</taxon>
    </lineage>
</organism>
<gene>
    <name evidence="1" type="primary">rsmG</name>
    <name type="synonym">gidB</name>
    <name type="ordered locus">MAP_4345c</name>
</gene>
<accession>Q9L7M3</accession>
<proteinExistence type="inferred from homology"/>
<name>RSMG_MYCPA</name>
<feature type="chain" id="PRO_0000184282" description="Ribosomal RNA small subunit methyltransferase G">
    <location>
        <begin position="1"/>
        <end position="248"/>
    </location>
</feature>
<feature type="region of interest" description="Disordered" evidence="2">
    <location>
        <begin position="1"/>
        <end position="23"/>
    </location>
</feature>
<feature type="region of interest" description="Disordered" evidence="2">
    <location>
        <begin position="226"/>
        <end position="248"/>
    </location>
</feature>
<feature type="compositionally biased region" description="Basic residues" evidence="2">
    <location>
        <begin position="230"/>
        <end position="248"/>
    </location>
</feature>
<feature type="binding site" evidence="1">
    <location>
        <position position="93"/>
    </location>
    <ligand>
        <name>S-adenosyl-L-methionine</name>
        <dbReference type="ChEBI" id="CHEBI:59789"/>
    </ligand>
</feature>
<feature type="binding site" evidence="1">
    <location>
        <position position="98"/>
    </location>
    <ligand>
        <name>S-adenosyl-L-methionine</name>
        <dbReference type="ChEBI" id="CHEBI:59789"/>
    </ligand>
</feature>
<feature type="binding site" evidence="1">
    <location>
        <begin position="143"/>
        <end position="144"/>
    </location>
    <ligand>
        <name>S-adenosyl-L-methionine</name>
        <dbReference type="ChEBI" id="CHEBI:59789"/>
    </ligand>
</feature>
<feature type="binding site" evidence="1">
    <location>
        <position position="161"/>
    </location>
    <ligand>
        <name>S-adenosyl-L-methionine</name>
        <dbReference type="ChEBI" id="CHEBI:59789"/>
    </ligand>
</feature>
<dbReference type="EC" id="2.1.1.-" evidence="1"/>
<dbReference type="EMBL" id="AE016958">
    <property type="protein sequence ID" value="AAS06895.1"/>
    <property type="molecule type" value="Genomic_DNA"/>
</dbReference>
<dbReference type="EMBL" id="AF222789">
    <property type="protein sequence ID" value="AAF33688.1"/>
    <property type="molecule type" value="Genomic_DNA"/>
</dbReference>
<dbReference type="RefSeq" id="WP_003874364.1">
    <property type="nucleotide sequence ID" value="NZ_CP106873.1"/>
</dbReference>
<dbReference type="SMR" id="Q9L7M3"/>
<dbReference type="STRING" id="262316.MAP_4345c"/>
<dbReference type="KEGG" id="mpa:MAP_4345c"/>
<dbReference type="PATRIC" id="fig|262316.17.peg.4624"/>
<dbReference type="eggNOG" id="COG0357">
    <property type="taxonomic scope" value="Bacteria"/>
</dbReference>
<dbReference type="HOGENOM" id="CLU_065341_5_0_11"/>
<dbReference type="Proteomes" id="UP000000580">
    <property type="component" value="Chromosome"/>
</dbReference>
<dbReference type="GO" id="GO:0005829">
    <property type="term" value="C:cytosol"/>
    <property type="evidence" value="ECO:0007669"/>
    <property type="project" value="TreeGrafter"/>
</dbReference>
<dbReference type="GO" id="GO:0070043">
    <property type="term" value="F:rRNA (guanine-N7-)-methyltransferase activity"/>
    <property type="evidence" value="ECO:0007669"/>
    <property type="project" value="UniProtKB-UniRule"/>
</dbReference>
<dbReference type="Gene3D" id="3.40.50.150">
    <property type="entry name" value="Vaccinia Virus protein VP39"/>
    <property type="match status" value="1"/>
</dbReference>
<dbReference type="HAMAP" id="MF_00074">
    <property type="entry name" value="16SrRNA_methyltr_G"/>
    <property type="match status" value="1"/>
</dbReference>
<dbReference type="InterPro" id="IPR003682">
    <property type="entry name" value="rRNA_ssu_MeTfrase_G"/>
</dbReference>
<dbReference type="InterPro" id="IPR029063">
    <property type="entry name" value="SAM-dependent_MTases_sf"/>
</dbReference>
<dbReference type="NCBIfam" id="TIGR00138">
    <property type="entry name" value="rsmG_gidB"/>
    <property type="match status" value="1"/>
</dbReference>
<dbReference type="PANTHER" id="PTHR31760">
    <property type="entry name" value="S-ADENOSYL-L-METHIONINE-DEPENDENT METHYLTRANSFERASES SUPERFAMILY PROTEIN"/>
    <property type="match status" value="1"/>
</dbReference>
<dbReference type="PANTHER" id="PTHR31760:SF0">
    <property type="entry name" value="S-ADENOSYL-L-METHIONINE-DEPENDENT METHYLTRANSFERASES SUPERFAMILY PROTEIN"/>
    <property type="match status" value="1"/>
</dbReference>
<dbReference type="Pfam" id="PF02527">
    <property type="entry name" value="GidB"/>
    <property type="match status" value="1"/>
</dbReference>
<dbReference type="PIRSF" id="PIRSF003078">
    <property type="entry name" value="GidB"/>
    <property type="match status" value="1"/>
</dbReference>
<dbReference type="SUPFAM" id="SSF53335">
    <property type="entry name" value="S-adenosyl-L-methionine-dependent methyltransferases"/>
    <property type="match status" value="1"/>
</dbReference>
<keyword id="KW-0963">Cytoplasm</keyword>
<keyword id="KW-0489">Methyltransferase</keyword>
<keyword id="KW-1185">Reference proteome</keyword>
<keyword id="KW-0698">rRNA processing</keyword>
<keyword id="KW-0949">S-adenosyl-L-methionine</keyword>
<keyword id="KW-0808">Transferase</keyword>
<comment type="function">
    <text evidence="1">Specifically methylates the N7 position of guanine in position 518 of 16S rRNA.</text>
</comment>
<comment type="subcellular location">
    <subcellularLocation>
        <location evidence="1">Cytoplasm</location>
    </subcellularLocation>
</comment>
<comment type="similarity">
    <text evidence="1">Belongs to the methyltransferase superfamily. RNA methyltransferase RsmG family.</text>
</comment>
<protein>
    <recommendedName>
        <fullName evidence="1">Ribosomal RNA small subunit methyltransferase G</fullName>
        <ecNumber evidence="1">2.1.1.-</ecNumber>
    </recommendedName>
    <alternativeName>
        <fullName evidence="1">16S rRNA 7-methylguanosine methyltransferase</fullName>
        <shortName evidence="1">16S rRNA m7G methyltransferase</shortName>
    </alternativeName>
    <alternativeName>
        <fullName>Glucose-inhibited division protein B</fullName>
    </alternativeName>
</protein>
<reference key="1">
    <citation type="journal article" date="2005" name="Proc. Natl. Acad. Sci. U.S.A.">
        <title>The complete genome sequence of Mycobacterium avium subspecies paratuberculosis.</title>
        <authorList>
            <person name="Li L."/>
            <person name="Bannantine J.P."/>
            <person name="Zhang Q."/>
            <person name="Amonsin A."/>
            <person name="May B.J."/>
            <person name="Alt D."/>
            <person name="Banerji N."/>
            <person name="Kanjilal S."/>
            <person name="Kapur V."/>
        </authorList>
    </citation>
    <scope>NUCLEOTIDE SEQUENCE [LARGE SCALE GENOMIC DNA]</scope>
    <source>
        <strain>ATCC BAA-968 / K-10</strain>
    </source>
</reference>
<reference key="2">
    <citation type="journal article" date="2003" name="BMC Microbiol.">
        <title>Genomic homogeneity between Mycobacterium avium subsp. avium and Mycobacterium avium subsp. paratuberculosis belies their divergent growth rates.</title>
        <authorList>
            <person name="Bannantine J.P."/>
            <person name="Zhang Q."/>
            <person name="Li L.L."/>
            <person name="Kapur V."/>
        </authorList>
    </citation>
    <scope>NUCLEOTIDE SEQUENCE [GENOMIC DNA] OF 1-245</scope>
    <source>
        <strain>ATCC BAA-968 / K-10</strain>
    </source>
</reference>
<evidence type="ECO:0000255" key="1">
    <source>
        <dbReference type="HAMAP-Rule" id="MF_00074"/>
    </source>
</evidence>
<evidence type="ECO:0000256" key="2">
    <source>
        <dbReference type="SAM" id="MobiDB-lite"/>
    </source>
</evidence>
<sequence length="248" mass="26593">MFHVKHVGPVEPAAGDPEVPPVAELGAAPESAAALFGPRLATAQRYAEVLGTAGVERGLLGPREVDRIWDRHILNSAAVAELLGRGDRIIDIGSGAGLPGIPLAIARPDLEVVLLEPLLRRSEFLTEVVDELGLAVEVVRGRAEERPVRDRFGERDAAVSRAVAALDKLTKWSMPLLRHDGRMLAIKGERAAEEVDRYRRVMTASGAADVRVVTCGANYLRPPATVVSARRAKPPHPKSARTGKAGTR</sequence>